<sequence>MSEKFFEIFEKKLEKLKEQNLYRSVKDMESRHGMEITIQGKKYINFASNDYLGLSQHPLVKEAGIDAIKTFGAGGGASRLLSGGTILHRKLEELLSEFKNTESCLILNSGYTANTSLIPALAGENDIIFSDELNHASIIDGCRLSRAEKIIYKHADIEDLKKLIRNISCKGKKVIITDTVFSMDGDIAPIRELYELCKAEGALLYIDDAHGTGVLGNGYGILKHLGLQTEAFVIQMGTLSKAIGVFGAFVCGDSSIIDWFINSARGFIFSTSLPPSTVASAYASLKIIMEDKELIKRLWQNIEKVMEIIKNLELKTTKTQTPIIPILFENIEQAIKASRILYDSGIYAPVIRPPTVKTPRIRITITAGHSDNDIEKLSGALTLLNSIF</sequence>
<evidence type="ECO:0000250" key="1"/>
<evidence type="ECO:0000305" key="2"/>
<comment type="function">
    <text evidence="1">Catalyzes the decarboxylative condensation of pimeloyl-[acyl-carrier protein] and L-alanine to produce 8-amino-7-oxononanoate (AON), [acyl-carrier protein], and carbon dioxide.</text>
</comment>
<comment type="catalytic activity">
    <reaction>
        <text>6-carboxyhexanoyl-[ACP] + L-alanine + H(+) = (8S)-8-amino-7-oxononanoate + holo-[ACP] + CO2</text>
        <dbReference type="Rhea" id="RHEA:42288"/>
        <dbReference type="Rhea" id="RHEA-COMP:9685"/>
        <dbReference type="Rhea" id="RHEA-COMP:9955"/>
        <dbReference type="ChEBI" id="CHEBI:15378"/>
        <dbReference type="ChEBI" id="CHEBI:16526"/>
        <dbReference type="ChEBI" id="CHEBI:57972"/>
        <dbReference type="ChEBI" id="CHEBI:64479"/>
        <dbReference type="ChEBI" id="CHEBI:78846"/>
        <dbReference type="ChEBI" id="CHEBI:149468"/>
        <dbReference type="EC" id="2.3.1.47"/>
    </reaction>
</comment>
<comment type="cofactor">
    <cofactor evidence="1">
        <name>pyridoxal 5'-phosphate</name>
        <dbReference type="ChEBI" id="CHEBI:597326"/>
    </cofactor>
</comment>
<comment type="pathway">
    <text>Cofactor biosynthesis; biotin biosynthesis.</text>
</comment>
<comment type="subunit">
    <text evidence="1">Homodimer.</text>
</comment>
<comment type="similarity">
    <text evidence="2">Belongs to the class-II pyridoxal-phosphate-dependent aminotransferase family. BioF subfamily.</text>
</comment>
<dbReference type="EC" id="2.3.1.47"/>
<dbReference type="EMBL" id="CP001147">
    <property type="protein sequence ID" value="ACI20707.1"/>
    <property type="molecule type" value="Genomic_DNA"/>
</dbReference>
<dbReference type="RefSeq" id="WP_012545441.1">
    <property type="nucleotide sequence ID" value="NC_011296.1"/>
</dbReference>
<dbReference type="RefSeq" id="YP_002249143.1">
    <property type="nucleotide sequence ID" value="NC_011296.1"/>
</dbReference>
<dbReference type="SMR" id="B5YFU5"/>
<dbReference type="FunCoup" id="B5YFU5">
    <property type="interactions" value="169"/>
</dbReference>
<dbReference type="STRING" id="289376.THEYE_A1333"/>
<dbReference type="EnsemblBacteria" id="ACI20707">
    <property type="protein sequence ID" value="ACI20707"/>
    <property type="gene ID" value="THEYE_A1333"/>
</dbReference>
<dbReference type="KEGG" id="tye:THEYE_A1333"/>
<dbReference type="PATRIC" id="fig|289376.4.peg.1300"/>
<dbReference type="eggNOG" id="COG0156">
    <property type="taxonomic scope" value="Bacteria"/>
</dbReference>
<dbReference type="HOGENOM" id="CLU_015846_11_3_0"/>
<dbReference type="InParanoid" id="B5YFU5"/>
<dbReference type="OrthoDB" id="9807157at2"/>
<dbReference type="UniPathway" id="UPA00078"/>
<dbReference type="Proteomes" id="UP000000718">
    <property type="component" value="Chromosome"/>
</dbReference>
<dbReference type="GO" id="GO:0008710">
    <property type="term" value="F:8-amino-7-oxononanoate synthase activity"/>
    <property type="evidence" value="ECO:0007669"/>
    <property type="project" value="UniProtKB-EC"/>
</dbReference>
<dbReference type="GO" id="GO:0030170">
    <property type="term" value="F:pyridoxal phosphate binding"/>
    <property type="evidence" value="ECO:0007669"/>
    <property type="project" value="InterPro"/>
</dbReference>
<dbReference type="GO" id="GO:0009102">
    <property type="term" value="P:biotin biosynthetic process"/>
    <property type="evidence" value="ECO:0007669"/>
    <property type="project" value="UniProtKB-UniPathway"/>
</dbReference>
<dbReference type="CDD" id="cd06454">
    <property type="entry name" value="KBL_like"/>
    <property type="match status" value="1"/>
</dbReference>
<dbReference type="Gene3D" id="3.90.1150.10">
    <property type="entry name" value="Aspartate Aminotransferase, domain 1"/>
    <property type="match status" value="1"/>
</dbReference>
<dbReference type="Gene3D" id="3.40.640.10">
    <property type="entry name" value="Type I PLP-dependent aspartate aminotransferase-like (Major domain)"/>
    <property type="match status" value="1"/>
</dbReference>
<dbReference type="InterPro" id="IPR001917">
    <property type="entry name" value="Aminotrans_II_pyridoxalP_BS"/>
</dbReference>
<dbReference type="InterPro" id="IPR004839">
    <property type="entry name" value="Aminotransferase_I/II_large"/>
</dbReference>
<dbReference type="InterPro" id="IPR050087">
    <property type="entry name" value="AON_synthase_class-II"/>
</dbReference>
<dbReference type="InterPro" id="IPR004723">
    <property type="entry name" value="AONS_Archaea/Proteobacteria"/>
</dbReference>
<dbReference type="InterPro" id="IPR015424">
    <property type="entry name" value="PyrdxlP-dep_Trfase"/>
</dbReference>
<dbReference type="InterPro" id="IPR015421">
    <property type="entry name" value="PyrdxlP-dep_Trfase_major"/>
</dbReference>
<dbReference type="InterPro" id="IPR015422">
    <property type="entry name" value="PyrdxlP-dep_Trfase_small"/>
</dbReference>
<dbReference type="NCBIfam" id="TIGR00858">
    <property type="entry name" value="bioF"/>
    <property type="match status" value="1"/>
</dbReference>
<dbReference type="PANTHER" id="PTHR13693:SF77">
    <property type="entry name" value="8-AMINO-7-OXONONANOATE SYNTHASE"/>
    <property type="match status" value="1"/>
</dbReference>
<dbReference type="PANTHER" id="PTHR13693">
    <property type="entry name" value="CLASS II AMINOTRANSFERASE/8-AMINO-7-OXONONANOATE SYNTHASE"/>
    <property type="match status" value="1"/>
</dbReference>
<dbReference type="Pfam" id="PF00155">
    <property type="entry name" value="Aminotran_1_2"/>
    <property type="match status" value="1"/>
</dbReference>
<dbReference type="SUPFAM" id="SSF53383">
    <property type="entry name" value="PLP-dependent transferases"/>
    <property type="match status" value="1"/>
</dbReference>
<dbReference type="PROSITE" id="PS00599">
    <property type="entry name" value="AA_TRANSFER_CLASS_2"/>
    <property type="match status" value="1"/>
</dbReference>
<keyword id="KW-0093">Biotin biosynthesis</keyword>
<keyword id="KW-0663">Pyridoxal phosphate</keyword>
<keyword id="KW-1185">Reference proteome</keyword>
<keyword id="KW-0808">Transferase</keyword>
<protein>
    <recommendedName>
        <fullName>Putative 8-amino-7-oxononanoate synthase</fullName>
        <shortName>AONS</shortName>
        <ecNumber>2.3.1.47</ecNumber>
    </recommendedName>
    <alternativeName>
        <fullName>7-keto-8-amino-pelargonic acid synthase</fullName>
        <shortName>7-KAP synthase</shortName>
    </alternativeName>
    <alternativeName>
        <fullName>8-amino-7-ketopelargonate synthase</fullName>
    </alternativeName>
</protein>
<name>BIOF_THEYD</name>
<reference key="1">
    <citation type="submission" date="2008-08" db="EMBL/GenBank/DDBJ databases">
        <title>The complete genome sequence of Thermodesulfovibrio yellowstonii strain ATCC 51303 / DSM 11347 / YP87.</title>
        <authorList>
            <person name="Dodson R.J."/>
            <person name="Durkin A.S."/>
            <person name="Wu M."/>
            <person name="Eisen J."/>
            <person name="Sutton G."/>
        </authorList>
    </citation>
    <scope>NUCLEOTIDE SEQUENCE [LARGE SCALE GENOMIC DNA]</scope>
    <source>
        <strain>ATCC 51303 / DSM 11347 / YP87</strain>
    </source>
</reference>
<gene>
    <name type="primary">bioF</name>
    <name type="ordered locus">THEYE_A1333</name>
</gene>
<proteinExistence type="inferred from homology"/>
<organism>
    <name type="scientific">Thermodesulfovibrio yellowstonii (strain ATCC 51303 / DSM 11347 / YP87)</name>
    <dbReference type="NCBI Taxonomy" id="289376"/>
    <lineage>
        <taxon>Bacteria</taxon>
        <taxon>Pseudomonadati</taxon>
        <taxon>Nitrospirota</taxon>
        <taxon>Thermodesulfovibrionia</taxon>
        <taxon>Thermodesulfovibrionales</taxon>
        <taxon>Thermodesulfovibrionaceae</taxon>
        <taxon>Thermodesulfovibrio</taxon>
    </lineage>
</organism>
<accession>B5YFU5</accession>
<feature type="chain" id="PRO_0000381126" description="Putative 8-amino-7-oxononanoate synthase">
    <location>
        <begin position="1"/>
        <end position="388"/>
    </location>
</feature>
<feature type="binding site" evidence="1">
    <location>
        <position position="23"/>
    </location>
    <ligand>
        <name>substrate</name>
    </ligand>
</feature>
<feature type="binding site" evidence="1">
    <location>
        <begin position="110"/>
        <end position="111"/>
    </location>
    <ligand>
        <name>pyridoxal 5'-phosphate</name>
        <dbReference type="ChEBI" id="CHEBI:597326"/>
    </ligand>
</feature>
<feature type="binding site" evidence="1">
    <location>
        <position position="135"/>
    </location>
    <ligand>
        <name>substrate</name>
    </ligand>
</feature>
<feature type="binding site" evidence="1">
    <location>
        <position position="182"/>
    </location>
    <ligand>
        <name>pyridoxal 5'-phosphate</name>
        <dbReference type="ChEBI" id="CHEBI:597326"/>
    </ligand>
</feature>
<feature type="binding site" evidence="1">
    <location>
        <begin position="207"/>
        <end position="210"/>
    </location>
    <ligand>
        <name>pyridoxal 5'-phosphate</name>
        <dbReference type="ChEBI" id="CHEBI:597326"/>
    </ligand>
</feature>
<feature type="binding site" evidence="1">
    <location>
        <begin position="238"/>
        <end position="241"/>
    </location>
    <ligand>
        <name>pyridoxal 5'-phosphate</name>
        <dbReference type="ChEBI" id="CHEBI:597326"/>
    </ligand>
</feature>
<feature type="binding site" evidence="1">
    <location>
        <position position="355"/>
    </location>
    <ligand>
        <name>substrate</name>
    </ligand>
</feature>
<feature type="modified residue" description="N6-(pyridoxal phosphate)lysine" evidence="1">
    <location>
        <position position="241"/>
    </location>
</feature>